<protein>
    <recommendedName>
        <fullName evidence="4">U2-lycotoxin-Ls1d</fullName>
        <shortName evidence="4">U2-LCTX-Ls1d</shortName>
    </recommendedName>
    <alternativeName>
        <fullName evidence="3">Toxin LSTX-M4</fullName>
    </alternativeName>
</protein>
<sequence length="105" mass="12127">MIKYVLISALLVVAVYSFTIEDNEDALLEEAEDELDTEEERRMALPPGAVCNGHKSDCQCFGAKYECSCPFLWRFRRSAKCHCKKGWAWTAVKKRSCHNRYQWSG</sequence>
<accession>B6DD32</accession>
<reference key="1">
    <citation type="journal article" date="2010" name="Zoology">
        <title>Transcriptome analysis of the venom glands of the Chinese wolf spider Lycosa singoriensis.</title>
        <authorList>
            <person name="Zhang Y."/>
            <person name="Chen J."/>
            <person name="Tang X."/>
            <person name="Wang F."/>
            <person name="Jiang L."/>
            <person name="Xiong X."/>
            <person name="Wang M."/>
            <person name="Rong M."/>
            <person name="Liu Z."/>
            <person name="Liang S."/>
        </authorList>
    </citation>
    <scope>NUCLEOTIDE SEQUENCE [LARGE SCALE MRNA]</scope>
    <source>
        <tissue>Venom gland</tissue>
    </source>
</reference>
<evidence type="ECO:0000250" key="1">
    <source>
        <dbReference type="UniProtKB" id="C0HLR8"/>
    </source>
</evidence>
<evidence type="ECO:0000255" key="2"/>
<evidence type="ECO:0000303" key="3">
    <source>
    </source>
</evidence>
<evidence type="ECO:0000305" key="4"/>
<evidence type="ECO:0000305" key="5">
    <source>
    </source>
</evidence>
<proteinExistence type="inferred from homology"/>
<feature type="signal peptide" evidence="2">
    <location>
        <begin position="1"/>
        <end position="17"/>
    </location>
</feature>
<feature type="propeptide" id="PRO_0000401719" evidence="5">
    <location>
        <begin position="18"/>
        <end position="41"/>
    </location>
</feature>
<feature type="chain" id="PRO_0000401720" description="U2-lycotoxin-Ls1d" evidence="5">
    <location>
        <begin position="42"/>
        <end position="105"/>
    </location>
</feature>
<feature type="disulfide bond" evidence="1">
    <location>
        <begin position="51"/>
        <end position="67"/>
    </location>
</feature>
<feature type="disulfide bond" evidence="1">
    <location>
        <begin position="58"/>
        <end position="97"/>
    </location>
</feature>
<feature type="disulfide bond" evidence="1">
    <location>
        <begin position="60"/>
        <end position="83"/>
    </location>
</feature>
<feature type="disulfide bond" evidence="1">
    <location>
        <begin position="69"/>
        <end position="81"/>
    </location>
</feature>
<comment type="function">
    <text evidence="1">Insecticidal to house crickets. It induces an excitatory slow-onset impact that leads to irreversible spastic paralysis. It also modifies human voltage-gated potassium channel Kv1.5/KCNA5. Most likely, it binds to the voltage-sensing domain of the channel, suggesting it does not block the pore but prevents its opening at physiological membrane potentials. The recombinant peptide binds to the channel in an irreversible manner and slows down the hKv1.5 current activation kinetics. It is not toxic to mice, when intracranially injected (at 0.5 ug/g mouse).</text>
</comment>
<comment type="subcellular location">
    <subcellularLocation>
        <location evidence="5">Secreted</location>
    </subcellularLocation>
</comment>
<comment type="tissue specificity">
    <text evidence="5">Expressed by the venom gland.</text>
</comment>
<comment type="similarity">
    <text evidence="4">Belongs to the neurotoxin 04 (omega-agtx) family. 01 (type I omega-agtx) subfamily.</text>
</comment>
<organism>
    <name type="scientific">Lycosa singoriensis</name>
    <name type="common">Wolf spider</name>
    <name type="synonym">Aranea singoriensis</name>
    <dbReference type="NCBI Taxonomy" id="434756"/>
    <lineage>
        <taxon>Eukaryota</taxon>
        <taxon>Metazoa</taxon>
        <taxon>Ecdysozoa</taxon>
        <taxon>Arthropoda</taxon>
        <taxon>Chelicerata</taxon>
        <taxon>Arachnida</taxon>
        <taxon>Araneae</taxon>
        <taxon>Araneomorphae</taxon>
        <taxon>Entelegynae</taxon>
        <taxon>Lycosoidea</taxon>
        <taxon>Lycosidae</taxon>
        <taxon>Lycosa</taxon>
    </lineage>
</organism>
<dbReference type="EMBL" id="EU926116">
    <property type="protein sequence ID" value="ACI41448.1"/>
    <property type="molecule type" value="mRNA"/>
</dbReference>
<dbReference type="EMBL" id="FM864120">
    <property type="protein sequence ID" value="CAS03717.1"/>
    <property type="molecule type" value="mRNA"/>
</dbReference>
<dbReference type="ArachnoServer" id="AS001055">
    <property type="toxin name" value="U2-lycotoxin-Ls1d"/>
</dbReference>
<dbReference type="GO" id="GO:0005576">
    <property type="term" value="C:extracellular region"/>
    <property type="evidence" value="ECO:0007669"/>
    <property type="project" value="UniProtKB-SubCell"/>
</dbReference>
<dbReference type="GO" id="GO:0015459">
    <property type="term" value="F:potassium channel regulator activity"/>
    <property type="evidence" value="ECO:0007669"/>
    <property type="project" value="UniProtKB-KW"/>
</dbReference>
<dbReference type="GO" id="GO:0090729">
    <property type="term" value="F:toxin activity"/>
    <property type="evidence" value="ECO:0007669"/>
    <property type="project" value="UniProtKB-KW"/>
</dbReference>
<dbReference type="InterPro" id="IPR013605">
    <property type="entry name" value="Toxin_34"/>
</dbReference>
<dbReference type="Pfam" id="PF08396">
    <property type="entry name" value="Toxin_34"/>
    <property type="match status" value="1"/>
</dbReference>
<keyword id="KW-1015">Disulfide bond</keyword>
<keyword id="KW-0872">Ion channel impairing toxin</keyword>
<keyword id="KW-0528">Neurotoxin</keyword>
<keyword id="KW-0632">Potassium channel impairing toxin</keyword>
<keyword id="KW-0964">Secreted</keyword>
<keyword id="KW-0732">Signal</keyword>
<keyword id="KW-0800">Toxin</keyword>
<keyword id="KW-1220">Voltage-gated potassium channel impairing toxin</keyword>
<name>TX2M4_LYCSI</name>